<accession>Q8EM80</accession>
<dbReference type="EMBL" id="BA000028">
    <property type="protein sequence ID" value="BAC14934.1"/>
    <property type="molecule type" value="Genomic_DNA"/>
</dbReference>
<dbReference type="RefSeq" id="WP_011067375.1">
    <property type="nucleotide sequence ID" value="NC_004193.1"/>
</dbReference>
<dbReference type="SMR" id="Q8EM80"/>
<dbReference type="STRING" id="221109.gene:10735230"/>
<dbReference type="KEGG" id="oih:OB2978"/>
<dbReference type="eggNOG" id="COG0712">
    <property type="taxonomic scope" value="Bacteria"/>
</dbReference>
<dbReference type="HOGENOM" id="CLU_085114_4_1_9"/>
<dbReference type="OrthoDB" id="9802471at2"/>
<dbReference type="PhylomeDB" id="Q8EM80"/>
<dbReference type="Proteomes" id="UP000000822">
    <property type="component" value="Chromosome"/>
</dbReference>
<dbReference type="GO" id="GO:0005886">
    <property type="term" value="C:plasma membrane"/>
    <property type="evidence" value="ECO:0007669"/>
    <property type="project" value="UniProtKB-SubCell"/>
</dbReference>
<dbReference type="GO" id="GO:0045259">
    <property type="term" value="C:proton-transporting ATP synthase complex"/>
    <property type="evidence" value="ECO:0007669"/>
    <property type="project" value="UniProtKB-KW"/>
</dbReference>
<dbReference type="GO" id="GO:0046933">
    <property type="term" value="F:proton-transporting ATP synthase activity, rotational mechanism"/>
    <property type="evidence" value="ECO:0007669"/>
    <property type="project" value="UniProtKB-UniRule"/>
</dbReference>
<dbReference type="Gene3D" id="1.10.520.20">
    <property type="entry name" value="N-terminal domain of the delta subunit of the F1F0-ATP synthase"/>
    <property type="match status" value="1"/>
</dbReference>
<dbReference type="HAMAP" id="MF_01416">
    <property type="entry name" value="ATP_synth_delta_bact"/>
    <property type="match status" value="1"/>
</dbReference>
<dbReference type="InterPro" id="IPR026015">
    <property type="entry name" value="ATP_synth_OSCP/delta_N_sf"/>
</dbReference>
<dbReference type="InterPro" id="IPR020781">
    <property type="entry name" value="ATPase_OSCP/d_CS"/>
</dbReference>
<dbReference type="InterPro" id="IPR000711">
    <property type="entry name" value="ATPase_OSCP/dsu"/>
</dbReference>
<dbReference type="NCBIfam" id="TIGR01145">
    <property type="entry name" value="ATP_synt_delta"/>
    <property type="match status" value="1"/>
</dbReference>
<dbReference type="NCBIfam" id="NF004403">
    <property type="entry name" value="PRK05758.2-4"/>
    <property type="match status" value="1"/>
</dbReference>
<dbReference type="PANTHER" id="PTHR11910">
    <property type="entry name" value="ATP SYNTHASE DELTA CHAIN"/>
    <property type="match status" value="1"/>
</dbReference>
<dbReference type="Pfam" id="PF00213">
    <property type="entry name" value="OSCP"/>
    <property type="match status" value="1"/>
</dbReference>
<dbReference type="PRINTS" id="PR00125">
    <property type="entry name" value="ATPASEDELTA"/>
</dbReference>
<dbReference type="SUPFAM" id="SSF47928">
    <property type="entry name" value="N-terminal domain of the delta subunit of the F1F0-ATP synthase"/>
    <property type="match status" value="1"/>
</dbReference>
<dbReference type="PROSITE" id="PS00389">
    <property type="entry name" value="ATPASE_DELTA"/>
    <property type="match status" value="1"/>
</dbReference>
<sequence length="181" mass="20306">MSNSVVAKRYADALFQLGREKNSLDQLVADFLEVRQIFTNDQKLNVFLKHPKIDNEKKKQFLADVFKGADPVVINTLKLLVDRHRTSTIPSIVDHLVALVNDTKGIADATVYSIRELNTDEKEQLQTSFAKRLGKRSVQITNVVDPKILGGMKIRVGNTIYDGTVSNKLNRISRSIVSANK</sequence>
<keyword id="KW-0066">ATP synthesis</keyword>
<keyword id="KW-1003">Cell membrane</keyword>
<keyword id="KW-0139">CF(1)</keyword>
<keyword id="KW-0375">Hydrogen ion transport</keyword>
<keyword id="KW-0406">Ion transport</keyword>
<keyword id="KW-0472">Membrane</keyword>
<keyword id="KW-1185">Reference proteome</keyword>
<keyword id="KW-0813">Transport</keyword>
<evidence type="ECO:0000255" key="1">
    <source>
        <dbReference type="HAMAP-Rule" id="MF_01416"/>
    </source>
</evidence>
<protein>
    <recommendedName>
        <fullName evidence="1">ATP synthase subunit delta</fullName>
    </recommendedName>
    <alternativeName>
        <fullName evidence="1">ATP synthase F(1) sector subunit delta</fullName>
    </alternativeName>
    <alternativeName>
        <fullName evidence="1">F-type ATPase subunit delta</fullName>
        <shortName evidence="1">F-ATPase subunit delta</shortName>
    </alternativeName>
</protein>
<name>ATPD_OCEIH</name>
<reference key="1">
    <citation type="journal article" date="2002" name="Nucleic Acids Res.">
        <title>Genome sequence of Oceanobacillus iheyensis isolated from the Iheya Ridge and its unexpected adaptive capabilities to extreme environments.</title>
        <authorList>
            <person name="Takami H."/>
            <person name="Takaki Y."/>
            <person name="Uchiyama I."/>
        </authorList>
    </citation>
    <scope>NUCLEOTIDE SEQUENCE [LARGE SCALE GENOMIC DNA]</scope>
    <source>
        <strain>DSM 14371 / CIP 107618 / JCM 11309 / KCTC 3954 / HTE831</strain>
    </source>
</reference>
<comment type="function">
    <text evidence="1">F(1)F(0) ATP synthase produces ATP from ADP in the presence of a proton or sodium gradient. F-type ATPases consist of two structural domains, F(1) containing the extramembraneous catalytic core and F(0) containing the membrane proton channel, linked together by a central stalk and a peripheral stalk. During catalysis, ATP synthesis in the catalytic domain of F(1) is coupled via a rotary mechanism of the central stalk subunits to proton translocation.</text>
</comment>
<comment type="function">
    <text evidence="1">This protein is part of the stalk that links CF(0) to CF(1). It either transmits conformational changes from CF(0) to CF(1) or is implicated in proton conduction.</text>
</comment>
<comment type="subunit">
    <text evidence="1">F-type ATPases have 2 components, F(1) - the catalytic core - and F(0) - the membrane proton channel. F(1) has five subunits: alpha(3), beta(3), gamma(1), delta(1), epsilon(1). F(0) has three main subunits: a(1), b(2) and c(10-14). The alpha and beta chains form an alternating ring which encloses part of the gamma chain. F(1) is attached to F(0) by a central stalk formed by the gamma and epsilon chains, while a peripheral stalk is formed by the delta and b chains.</text>
</comment>
<comment type="subcellular location">
    <subcellularLocation>
        <location evidence="1">Cell membrane</location>
        <topology evidence="1">Peripheral membrane protein</topology>
    </subcellularLocation>
</comment>
<comment type="similarity">
    <text evidence="1">Belongs to the ATPase delta chain family.</text>
</comment>
<gene>
    <name evidence="1" type="primary">atpH</name>
    <name type="ordered locus">OB2978</name>
</gene>
<feature type="chain" id="PRO_0000371042" description="ATP synthase subunit delta">
    <location>
        <begin position="1"/>
        <end position="181"/>
    </location>
</feature>
<organism>
    <name type="scientific">Oceanobacillus iheyensis (strain DSM 14371 / CIP 107618 / JCM 11309 / KCTC 3954 / HTE831)</name>
    <dbReference type="NCBI Taxonomy" id="221109"/>
    <lineage>
        <taxon>Bacteria</taxon>
        <taxon>Bacillati</taxon>
        <taxon>Bacillota</taxon>
        <taxon>Bacilli</taxon>
        <taxon>Bacillales</taxon>
        <taxon>Bacillaceae</taxon>
        <taxon>Oceanobacillus</taxon>
    </lineage>
</organism>
<proteinExistence type="inferred from homology"/>